<name>UGPE_RHIME</name>
<keyword id="KW-0997">Cell inner membrane</keyword>
<keyword id="KW-1003">Cell membrane</keyword>
<keyword id="KW-0472">Membrane</keyword>
<keyword id="KW-0614">Plasmid</keyword>
<keyword id="KW-1185">Reference proteome</keyword>
<keyword id="KW-0812">Transmembrane</keyword>
<keyword id="KW-1133">Transmembrane helix</keyword>
<keyword id="KW-0813">Transport</keyword>
<comment type="function">
    <text evidence="1">Part of the ABC transporter complex UgpBAEC involved in sn-glycerol-3-phosphate (G3P) import. Probably responsible for the translocation of the substrate across the membrane.</text>
</comment>
<comment type="subunit">
    <text evidence="1">The complex is composed of two ATP-binding proteins (UgpC), two transmembrane proteins (UgpA and UgpE) and a solute-binding protein (UgpB).</text>
</comment>
<comment type="subcellular location">
    <subcellularLocation>
        <location evidence="1">Cell inner membrane</location>
        <topology evidence="2">Multi-pass membrane protein</topology>
    </subcellularLocation>
</comment>
<comment type="similarity">
    <text evidence="4">Belongs to the binding-protein-dependent transport system permease family.</text>
</comment>
<gene>
    <name type="primary">ugpE</name>
    <name type="ordered locus">RB0404</name>
    <name type="ORF">SMb20418</name>
</gene>
<sequence>MIEKRPISNLIGHLMLIIGIIIVVFPIYYTFVASSMSSVEIIRPPMPLVPGTRLAENYSEALSGGVERVVGVSLERLLFNTFVVAIAIAVGKIVISFLSAFAIVFFRFPLRMAFFWMIFITLMLPVEVRILPTYKVIVDLGLIDTYAGLTLPLMASATATFLFRQFFLTIPGELVEAARIDNAGPFRFMRDILLPLSKTNIAALFVILFIYGWTQYLWPLLVTNDSRMNTIIIGLRKMVDFTDASTPWNYVMVTAILAIIPPVAVVVLMQRWFVKGLVETEK</sequence>
<organism>
    <name type="scientific">Rhizobium meliloti (strain 1021)</name>
    <name type="common">Ensifer meliloti</name>
    <name type="synonym">Sinorhizobium meliloti</name>
    <dbReference type="NCBI Taxonomy" id="266834"/>
    <lineage>
        <taxon>Bacteria</taxon>
        <taxon>Pseudomonadati</taxon>
        <taxon>Pseudomonadota</taxon>
        <taxon>Alphaproteobacteria</taxon>
        <taxon>Hyphomicrobiales</taxon>
        <taxon>Rhizobiaceae</taxon>
        <taxon>Sinorhizobium/Ensifer group</taxon>
        <taxon>Sinorhizobium</taxon>
    </lineage>
</organism>
<evidence type="ECO:0000250" key="1">
    <source>
        <dbReference type="UniProtKB" id="P10906"/>
    </source>
</evidence>
<evidence type="ECO:0000255" key="2"/>
<evidence type="ECO:0000255" key="3">
    <source>
        <dbReference type="PROSITE-ProRule" id="PRU00441"/>
    </source>
</evidence>
<evidence type="ECO:0000305" key="4"/>
<dbReference type="EMBL" id="AL591985">
    <property type="protein sequence ID" value="CAC48804.1"/>
    <property type="molecule type" value="Genomic_DNA"/>
</dbReference>
<dbReference type="PIR" id="D95892">
    <property type="entry name" value="D95892"/>
</dbReference>
<dbReference type="RefSeq" id="NP_436944.1">
    <property type="nucleotide sequence ID" value="NC_003078.1"/>
</dbReference>
<dbReference type="RefSeq" id="WP_010975292.1">
    <property type="nucleotide sequence ID" value="NC_003078.1"/>
</dbReference>
<dbReference type="SMR" id="Q92WD7"/>
<dbReference type="EnsemblBacteria" id="CAC48804">
    <property type="protein sequence ID" value="CAC48804"/>
    <property type="gene ID" value="SM_b20418"/>
</dbReference>
<dbReference type="KEGG" id="sme:SM_b20418"/>
<dbReference type="PATRIC" id="fig|266834.11.peg.5333"/>
<dbReference type="eggNOG" id="COG0395">
    <property type="taxonomic scope" value="Bacteria"/>
</dbReference>
<dbReference type="HOGENOM" id="CLU_016047_1_1_5"/>
<dbReference type="OrthoDB" id="9815445at2"/>
<dbReference type="PRO" id="PR:Q92WD7"/>
<dbReference type="Proteomes" id="UP000001976">
    <property type="component" value="Plasmid pSymB"/>
</dbReference>
<dbReference type="GO" id="GO:0005886">
    <property type="term" value="C:plasma membrane"/>
    <property type="evidence" value="ECO:0007669"/>
    <property type="project" value="UniProtKB-SubCell"/>
</dbReference>
<dbReference type="GO" id="GO:0055085">
    <property type="term" value="P:transmembrane transport"/>
    <property type="evidence" value="ECO:0007669"/>
    <property type="project" value="InterPro"/>
</dbReference>
<dbReference type="CDD" id="cd06261">
    <property type="entry name" value="TM_PBP2"/>
    <property type="match status" value="1"/>
</dbReference>
<dbReference type="Gene3D" id="1.10.3720.10">
    <property type="entry name" value="MetI-like"/>
    <property type="match status" value="1"/>
</dbReference>
<dbReference type="InterPro" id="IPR000515">
    <property type="entry name" value="MetI-like"/>
</dbReference>
<dbReference type="InterPro" id="IPR035906">
    <property type="entry name" value="MetI-like_sf"/>
</dbReference>
<dbReference type="NCBIfam" id="NF008210">
    <property type="entry name" value="PRK10973.1"/>
    <property type="match status" value="1"/>
</dbReference>
<dbReference type="PANTHER" id="PTHR43744">
    <property type="entry name" value="ABC TRANSPORTER PERMEASE PROTEIN MG189-RELATED-RELATED"/>
    <property type="match status" value="1"/>
</dbReference>
<dbReference type="PANTHER" id="PTHR43744:SF8">
    <property type="entry name" value="SN-GLYCEROL-3-PHOSPHATE TRANSPORT SYSTEM PERMEASE PROTEIN UGPE"/>
    <property type="match status" value="1"/>
</dbReference>
<dbReference type="Pfam" id="PF00528">
    <property type="entry name" value="BPD_transp_1"/>
    <property type="match status" value="1"/>
</dbReference>
<dbReference type="SUPFAM" id="SSF161098">
    <property type="entry name" value="MetI-like"/>
    <property type="match status" value="1"/>
</dbReference>
<dbReference type="PROSITE" id="PS50928">
    <property type="entry name" value="ABC_TM1"/>
    <property type="match status" value="1"/>
</dbReference>
<proteinExistence type="inferred from homology"/>
<feature type="chain" id="PRO_0000290141" description="sn-glycerol-3-phosphate transport system permease protein UgpE">
    <location>
        <begin position="1"/>
        <end position="282"/>
    </location>
</feature>
<feature type="transmembrane region" description="Helical" evidence="3">
    <location>
        <begin position="14"/>
        <end position="34"/>
    </location>
</feature>
<feature type="transmembrane region" description="Helical" evidence="3">
    <location>
        <begin position="86"/>
        <end position="106"/>
    </location>
</feature>
<feature type="transmembrane region" description="Helical" evidence="3">
    <location>
        <begin position="112"/>
        <end position="132"/>
    </location>
</feature>
<feature type="transmembrane region" description="Helical" evidence="3">
    <location>
        <begin position="136"/>
        <end position="156"/>
    </location>
</feature>
<feature type="transmembrane region" description="Helical" evidence="3">
    <location>
        <begin position="201"/>
        <end position="221"/>
    </location>
</feature>
<feature type="transmembrane region" description="Helical" evidence="3">
    <location>
        <begin position="248"/>
        <end position="268"/>
    </location>
</feature>
<feature type="domain" description="ABC transmembrane type-1" evidence="3">
    <location>
        <begin position="78"/>
        <end position="269"/>
    </location>
</feature>
<protein>
    <recommendedName>
        <fullName evidence="1">sn-glycerol-3-phosphate transport system permease protein UgpE</fullName>
    </recommendedName>
</protein>
<geneLocation type="plasmid">
    <name>pSymB</name>
    <name>megaplasmid 2</name>
</geneLocation>
<reference key="1">
    <citation type="journal article" date="2001" name="Proc. Natl. Acad. Sci. U.S.A.">
        <title>The complete sequence of the 1,683-kb pSymB megaplasmid from the N2-fixing endosymbiont Sinorhizobium meliloti.</title>
        <authorList>
            <person name="Finan T.M."/>
            <person name="Weidner S."/>
            <person name="Wong K."/>
            <person name="Buhrmester J."/>
            <person name="Chain P."/>
            <person name="Vorhoelter F.J."/>
            <person name="Hernandez-Lucas I."/>
            <person name="Becker A."/>
            <person name="Cowie A."/>
            <person name="Gouzy J."/>
            <person name="Golding B."/>
            <person name="Puehler A."/>
        </authorList>
    </citation>
    <scope>NUCLEOTIDE SEQUENCE [LARGE SCALE GENOMIC DNA]</scope>
    <source>
        <strain>1021</strain>
    </source>
</reference>
<reference key="2">
    <citation type="journal article" date="2001" name="Science">
        <title>The composite genome of the legume symbiont Sinorhizobium meliloti.</title>
        <authorList>
            <person name="Galibert F."/>
            <person name="Finan T.M."/>
            <person name="Long S.R."/>
            <person name="Puehler A."/>
            <person name="Abola P."/>
            <person name="Ampe F."/>
            <person name="Barloy-Hubler F."/>
            <person name="Barnett M.J."/>
            <person name="Becker A."/>
            <person name="Boistard P."/>
            <person name="Bothe G."/>
            <person name="Boutry M."/>
            <person name="Bowser L."/>
            <person name="Buhrmester J."/>
            <person name="Cadieu E."/>
            <person name="Capela D."/>
            <person name="Chain P."/>
            <person name="Cowie A."/>
            <person name="Davis R.W."/>
            <person name="Dreano S."/>
            <person name="Federspiel N.A."/>
            <person name="Fisher R.F."/>
            <person name="Gloux S."/>
            <person name="Godrie T."/>
            <person name="Goffeau A."/>
            <person name="Golding B."/>
            <person name="Gouzy J."/>
            <person name="Gurjal M."/>
            <person name="Hernandez-Lucas I."/>
            <person name="Hong A."/>
            <person name="Huizar L."/>
            <person name="Hyman R.W."/>
            <person name="Jones T."/>
            <person name="Kahn D."/>
            <person name="Kahn M.L."/>
            <person name="Kalman S."/>
            <person name="Keating D.H."/>
            <person name="Kiss E."/>
            <person name="Komp C."/>
            <person name="Lelaure V."/>
            <person name="Masuy D."/>
            <person name="Palm C."/>
            <person name="Peck M.C."/>
            <person name="Pohl T.M."/>
            <person name="Portetelle D."/>
            <person name="Purnelle B."/>
            <person name="Ramsperger U."/>
            <person name="Surzycki R."/>
            <person name="Thebault P."/>
            <person name="Vandenbol M."/>
            <person name="Vorhoelter F.J."/>
            <person name="Weidner S."/>
            <person name="Wells D.H."/>
            <person name="Wong K."/>
            <person name="Yeh K.-C."/>
            <person name="Batut J."/>
        </authorList>
    </citation>
    <scope>NUCLEOTIDE SEQUENCE [LARGE SCALE GENOMIC DNA]</scope>
    <source>
        <strain>1021</strain>
    </source>
</reference>
<accession>Q92WD7</accession>